<proteinExistence type="inferred from homology"/>
<reference key="1">
    <citation type="journal article" date="2002" name="J. Bacteriol.">
        <title>Whole-genome comparison of Mycobacterium tuberculosis clinical and laboratory strains.</title>
        <authorList>
            <person name="Fleischmann R.D."/>
            <person name="Alland D."/>
            <person name="Eisen J.A."/>
            <person name="Carpenter L."/>
            <person name="White O."/>
            <person name="Peterson J.D."/>
            <person name="DeBoy R.T."/>
            <person name="Dodson R.J."/>
            <person name="Gwinn M.L."/>
            <person name="Haft D.H."/>
            <person name="Hickey E.K."/>
            <person name="Kolonay J.F."/>
            <person name="Nelson W.C."/>
            <person name="Umayam L.A."/>
            <person name="Ermolaeva M.D."/>
            <person name="Salzberg S.L."/>
            <person name="Delcher A."/>
            <person name="Utterback T.R."/>
            <person name="Weidman J.F."/>
            <person name="Khouri H.M."/>
            <person name="Gill J."/>
            <person name="Mikula A."/>
            <person name="Bishai W."/>
            <person name="Jacobs W.R. Jr."/>
            <person name="Venter J.C."/>
            <person name="Fraser C.M."/>
        </authorList>
    </citation>
    <scope>NUCLEOTIDE SEQUENCE [LARGE SCALE GENOMIC DNA]</scope>
    <source>
        <strain>CDC 1551 / Oshkosh</strain>
    </source>
</reference>
<name>Y910_MYCTO</name>
<organism>
    <name type="scientific">Mycobacterium tuberculosis (strain CDC 1551 / Oshkosh)</name>
    <dbReference type="NCBI Taxonomy" id="83331"/>
    <lineage>
        <taxon>Bacteria</taxon>
        <taxon>Bacillati</taxon>
        <taxon>Actinomycetota</taxon>
        <taxon>Actinomycetes</taxon>
        <taxon>Mycobacteriales</taxon>
        <taxon>Mycobacteriaceae</taxon>
        <taxon>Mycobacterium</taxon>
        <taxon>Mycobacterium tuberculosis complex</taxon>
    </lineage>
</organism>
<comment type="function">
    <text evidence="1">Toxic component of a type II toxin-antitoxin (TA) system. Its toxic effect is neutralized by coexpression with cognate antitoxin MT0933 (By similarity).</text>
</comment>
<keyword id="KW-1185">Reference proteome</keyword>
<keyword id="KW-1277">Toxin-antitoxin system</keyword>
<protein>
    <recommendedName>
        <fullName>Toxin MT0934</fullName>
    </recommendedName>
</protein>
<evidence type="ECO:0000250" key="1"/>
<sequence>MAKLSGSIDVPLPPEEAWMHASDLTRYREWLTIHKVWRSKLPEVLEKGTVVESYVEVKGMPNRIKWTIVRYKPPEGMTLNGDGVGGVKVKLIAKVAPKEHGSVVSFDVHLGGPALLGPIGMIVAAALRADIRESLQNFVTVFAG</sequence>
<accession>P9WJ04</accession>
<accession>L0T7V9</accession>
<accession>O05902</accession>
<accession>Q7D942</accession>
<feature type="chain" id="PRO_0000427914" description="Toxin MT0934">
    <location>
        <begin position="1"/>
        <end position="144"/>
    </location>
</feature>
<gene>
    <name type="ordered locus">MT0934</name>
</gene>
<dbReference type="EMBL" id="AE000516">
    <property type="protein sequence ID" value="AAK45181.1"/>
    <property type="molecule type" value="Genomic_DNA"/>
</dbReference>
<dbReference type="PIR" id="F70581">
    <property type="entry name" value="F70581"/>
</dbReference>
<dbReference type="RefSeq" id="WP_003404726.1">
    <property type="nucleotide sequence ID" value="NZ_KK341227.1"/>
</dbReference>
<dbReference type="SMR" id="P9WJ04"/>
<dbReference type="KEGG" id="mtc:MT0934"/>
<dbReference type="PATRIC" id="fig|83331.31.peg.1003"/>
<dbReference type="HOGENOM" id="CLU_122359_0_0_11"/>
<dbReference type="Proteomes" id="UP000001020">
    <property type="component" value="Chromosome"/>
</dbReference>
<dbReference type="CDD" id="cd07812">
    <property type="entry name" value="SRPBCC"/>
    <property type="match status" value="1"/>
</dbReference>
<dbReference type="FunFam" id="3.30.530.20:FF:000041">
    <property type="entry name" value="Toxin MT0934"/>
    <property type="match status" value="1"/>
</dbReference>
<dbReference type="Gene3D" id="3.30.530.20">
    <property type="match status" value="1"/>
</dbReference>
<dbReference type="InterPro" id="IPR019587">
    <property type="entry name" value="Polyketide_cyclase/dehydratase"/>
</dbReference>
<dbReference type="InterPro" id="IPR023393">
    <property type="entry name" value="START-like_dom_sf"/>
</dbReference>
<dbReference type="Pfam" id="PF10604">
    <property type="entry name" value="Polyketide_cyc2"/>
    <property type="match status" value="1"/>
</dbReference>
<dbReference type="SUPFAM" id="SSF55961">
    <property type="entry name" value="Bet v1-like"/>
    <property type="match status" value="1"/>
</dbReference>